<reference key="1">
    <citation type="journal article" date="2006" name="J. Bacteriol.">
        <title>Whole-genome sequence of Listeria welshimeri reveals common steps in genome reduction with Listeria innocua as compared to Listeria monocytogenes.</title>
        <authorList>
            <person name="Hain T."/>
            <person name="Steinweg C."/>
            <person name="Kuenne C.T."/>
            <person name="Billion A."/>
            <person name="Ghai R."/>
            <person name="Chatterjee S.S."/>
            <person name="Domann E."/>
            <person name="Kaerst U."/>
            <person name="Goesmann A."/>
            <person name="Bekel T."/>
            <person name="Bartels D."/>
            <person name="Kaiser O."/>
            <person name="Meyer F."/>
            <person name="Puehler A."/>
            <person name="Weisshaar B."/>
            <person name="Wehland J."/>
            <person name="Liang C."/>
            <person name="Dandekar T."/>
            <person name="Lampidis R."/>
            <person name="Kreft J."/>
            <person name="Goebel W."/>
            <person name="Chakraborty T."/>
        </authorList>
    </citation>
    <scope>NUCLEOTIDE SEQUENCE [LARGE SCALE GENOMIC DNA]</scope>
    <source>
        <strain>ATCC 35897 / DSM 20650 / CCUG 15529 / CIP 8149 / NCTC 11857 / SLCC 5334 / V8</strain>
    </source>
</reference>
<proteinExistence type="inferred from homology"/>
<feature type="chain" id="PRO_0000300528" description="Formate--tetrahydrofolate ligase">
    <location>
        <begin position="1"/>
        <end position="560"/>
    </location>
</feature>
<feature type="binding site" evidence="1">
    <location>
        <begin position="69"/>
        <end position="76"/>
    </location>
    <ligand>
        <name>ATP</name>
        <dbReference type="ChEBI" id="CHEBI:30616"/>
    </ligand>
</feature>
<organism>
    <name type="scientific">Listeria welshimeri serovar 6b (strain ATCC 35897 / DSM 20650 / CCUG 15529 / CIP 8149 / NCTC 11857 / SLCC 5334 / V8)</name>
    <dbReference type="NCBI Taxonomy" id="386043"/>
    <lineage>
        <taxon>Bacteria</taxon>
        <taxon>Bacillati</taxon>
        <taxon>Bacillota</taxon>
        <taxon>Bacilli</taxon>
        <taxon>Bacillales</taxon>
        <taxon>Listeriaceae</taxon>
        <taxon>Listeria</taxon>
    </lineage>
</organism>
<gene>
    <name evidence="1" type="primary">fhs</name>
    <name type="ordered locus">lwe1896</name>
</gene>
<keyword id="KW-0067">ATP-binding</keyword>
<keyword id="KW-0436">Ligase</keyword>
<keyword id="KW-0547">Nucleotide-binding</keyword>
<keyword id="KW-0554">One-carbon metabolism</keyword>
<comment type="catalytic activity">
    <reaction evidence="1">
        <text>(6S)-5,6,7,8-tetrahydrofolate + formate + ATP = (6R)-10-formyltetrahydrofolate + ADP + phosphate</text>
        <dbReference type="Rhea" id="RHEA:20221"/>
        <dbReference type="ChEBI" id="CHEBI:15740"/>
        <dbReference type="ChEBI" id="CHEBI:30616"/>
        <dbReference type="ChEBI" id="CHEBI:43474"/>
        <dbReference type="ChEBI" id="CHEBI:57453"/>
        <dbReference type="ChEBI" id="CHEBI:195366"/>
        <dbReference type="ChEBI" id="CHEBI:456216"/>
        <dbReference type="EC" id="6.3.4.3"/>
    </reaction>
</comment>
<comment type="pathway">
    <text evidence="1">One-carbon metabolism; tetrahydrofolate interconversion.</text>
</comment>
<comment type="similarity">
    <text evidence="1">Belongs to the formate--tetrahydrofolate ligase family.</text>
</comment>
<sequence>MSNKVKSDIEIASKAEILPVTTIAKHLGLDADALELYGKYKAKLSYDTIHSLKDQEPGKLVLVTAINPTPAGEGKSTVTVGLGDALSKKDKKTVIALREPSLGPTMGIKGGATGGGYAQVIPMEDINLHFTGDFHAITAANNALSAFIDNHMQQGNELGIDGRRIVWKRVVDLNDRALRKVVVGLGGPVQGVPREDGFDITVASEIMAIICLASDLKDLKKRLSEIVIGYNYKKEPITVGEMGYEGALTLLLKDALKPNLVQTLEHTPAIVHGGPFANIAHGCNSVSATSTALRLGDYVVTEAGFGADLGAEKFLDIKVPALGKAPDCVVIVATIRALKMHGGALKTELSEENVEALAKGFTNLQKHTESIQTFGIPYVVAINKFITDSDAEVAKLEALCEEHGIPFSLTEVWEKGGDGGLELADKVIAAVESGEADYNRIYDDAWSMEEKLEAIVTKVYGGIGVELSSKAQKQIVEFKKYGWDRYPICMAKTQYSLSDDPTLLGRPTDFVIHIREFIPKLGAGFVVALTGDVMTMPGLPKKPAALNMDVDENGNAQGLF</sequence>
<evidence type="ECO:0000255" key="1">
    <source>
        <dbReference type="HAMAP-Rule" id="MF_01543"/>
    </source>
</evidence>
<name>FTHS_LISW6</name>
<accession>A0AJY2</accession>
<dbReference type="EC" id="6.3.4.3" evidence="1"/>
<dbReference type="EMBL" id="AM263198">
    <property type="protein sequence ID" value="CAK21314.1"/>
    <property type="molecule type" value="Genomic_DNA"/>
</dbReference>
<dbReference type="RefSeq" id="WP_011702663.1">
    <property type="nucleotide sequence ID" value="NC_008555.1"/>
</dbReference>
<dbReference type="SMR" id="A0AJY2"/>
<dbReference type="STRING" id="386043.lwe1896"/>
<dbReference type="GeneID" id="61189797"/>
<dbReference type="KEGG" id="lwe:lwe1896"/>
<dbReference type="eggNOG" id="COG2759">
    <property type="taxonomic scope" value="Bacteria"/>
</dbReference>
<dbReference type="HOGENOM" id="CLU_003601_3_3_9"/>
<dbReference type="OrthoDB" id="9761733at2"/>
<dbReference type="UniPathway" id="UPA00193"/>
<dbReference type="Proteomes" id="UP000000779">
    <property type="component" value="Chromosome"/>
</dbReference>
<dbReference type="GO" id="GO:0005524">
    <property type="term" value="F:ATP binding"/>
    <property type="evidence" value="ECO:0007669"/>
    <property type="project" value="UniProtKB-UniRule"/>
</dbReference>
<dbReference type="GO" id="GO:0004329">
    <property type="term" value="F:formate-tetrahydrofolate ligase activity"/>
    <property type="evidence" value="ECO:0007669"/>
    <property type="project" value="UniProtKB-UniRule"/>
</dbReference>
<dbReference type="GO" id="GO:0035999">
    <property type="term" value="P:tetrahydrofolate interconversion"/>
    <property type="evidence" value="ECO:0007669"/>
    <property type="project" value="UniProtKB-UniRule"/>
</dbReference>
<dbReference type="CDD" id="cd00477">
    <property type="entry name" value="FTHFS"/>
    <property type="match status" value="1"/>
</dbReference>
<dbReference type="FunFam" id="3.30.1510.10:FF:000001">
    <property type="entry name" value="Formate--tetrahydrofolate ligase"/>
    <property type="match status" value="1"/>
</dbReference>
<dbReference type="FunFam" id="3.10.410.10:FF:000001">
    <property type="entry name" value="Putative formate--tetrahydrofolate ligase"/>
    <property type="match status" value="1"/>
</dbReference>
<dbReference type="Gene3D" id="3.30.1510.10">
    <property type="entry name" value="Domain 2, N(10)-formyltetrahydrofolate synthetase"/>
    <property type="match status" value="1"/>
</dbReference>
<dbReference type="Gene3D" id="3.10.410.10">
    <property type="entry name" value="Formyltetrahydrofolate synthetase, domain 3"/>
    <property type="match status" value="1"/>
</dbReference>
<dbReference type="Gene3D" id="3.40.50.300">
    <property type="entry name" value="P-loop containing nucleotide triphosphate hydrolases"/>
    <property type="match status" value="1"/>
</dbReference>
<dbReference type="HAMAP" id="MF_01543">
    <property type="entry name" value="FTHFS"/>
    <property type="match status" value="1"/>
</dbReference>
<dbReference type="InterPro" id="IPR000559">
    <property type="entry name" value="Formate_THF_ligase"/>
</dbReference>
<dbReference type="InterPro" id="IPR020628">
    <property type="entry name" value="Formate_THF_ligase_CS"/>
</dbReference>
<dbReference type="InterPro" id="IPR027417">
    <property type="entry name" value="P-loop_NTPase"/>
</dbReference>
<dbReference type="NCBIfam" id="NF010030">
    <property type="entry name" value="PRK13505.1"/>
    <property type="match status" value="1"/>
</dbReference>
<dbReference type="Pfam" id="PF01268">
    <property type="entry name" value="FTHFS"/>
    <property type="match status" value="1"/>
</dbReference>
<dbReference type="SUPFAM" id="SSF52540">
    <property type="entry name" value="P-loop containing nucleoside triphosphate hydrolases"/>
    <property type="match status" value="1"/>
</dbReference>
<dbReference type="PROSITE" id="PS00721">
    <property type="entry name" value="FTHFS_1"/>
    <property type="match status" value="1"/>
</dbReference>
<dbReference type="PROSITE" id="PS00722">
    <property type="entry name" value="FTHFS_2"/>
    <property type="match status" value="1"/>
</dbReference>
<protein>
    <recommendedName>
        <fullName evidence="1">Formate--tetrahydrofolate ligase</fullName>
        <ecNumber evidence="1">6.3.4.3</ecNumber>
    </recommendedName>
    <alternativeName>
        <fullName evidence="1">Formyltetrahydrofolate synthetase</fullName>
        <shortName evidence="1">FHS</shortName>
        <shortName evidence="1">FTHFS</shortName>
    </alternativeName>
</protein>